<dbReference type="EMBL" id="AE016958">
    <property type="protein sequence ID" value="AAS02947.1"/>
    <property type="molecule type" value="Genomic_DNA"/>
</dbReference>
<dbReference type="RefSeq" id="WP_003875791.1">
    <property type="nucleotide sequence ID" value="NZ_CP106873.1"/>
</dbReference>
<dbReference type="SMR" id="Q743F5"/>
<dbReference type="STRING" id="262316.MAP_0630c"/>
<dbReference type="MEROPS" id="U56.001"/>
<dbReference type="KEGG" id="mpa:MAP_0630c"/>
<dbReference type="eggNOG" id="COG1659">
    <property type="taxonomic scope" value="Bacteria"/>
</dbReference>
<dbReference type="HOGENOM" id="CLU_089875_1_0_11"/>
<dbReference type="Proteomes" id="UP000000580">
    <property type="component" value="Chromosome"/>
</dbReference>
<dbReference type="GO" id="GO:0140737">
    <property type="term" value="C:encapsulin nanocompartment"/>
    <property type="evidence" value="ECO:0007669"/>
    <property type="project" value="UniProtKB-SubCell"/>
</dbReference>
<dbReference type="GO" id="GO:0005886">
    <property type="term" value="C:plasma membrane"/>
    <property type="evidence" value="ECO:0007669"/>
    <property type="project" value="UniProtKB-SubCell"/>
</dbReference>
<dbReference type="FunFam" id="3.30.2320.10:FF:000001">
    <property type="entry name" value="Bacteriocin CFP29"/>
    <property type="match status" value="1"/>
</dbReference>
<dbReference type="Gene3D" id="3.30.2400.30">
    <property type="match status" value="1"/>
</dbReference>
<dbReference type="Gene3D" id="3.30.2320.10">
    <property type="entry name" value="hypothetical protein PF0899 domain"/>
    <property type="match status" value="1"/>
</dbReference>
<dbReference type="InterPro" id="IPR007544">
    <property type="entry name" value="ENCAP"/>
</dbReference>
<dbReference type="InterPro" id="IPR051429">
    <property type="entry name" value="Encapsulin_nc"/>
</dbReference>
<dbReference type="NCBIfam" id="NF041155">
    <property type="entry name" value="encap_f1"/>
    <property type="match status" value="1"/>
</dbReference>
<dbReference type="PANTHER" id="PTHR37165">
    <property type="entry name" value="PEPTIDASE U56 FAMILY"/>
    <property type="match status" value="1"/>
</dbReference>
<dbReference type="PANTHER" id="PTHR37165:SF1">
    <property type="entry name" value="TYPE 1 ENCAPSULIN SHELL PROTEIN"/>
    <property type="match status" value="1"/>
</dbReference>
<dbReference type="Pfam" id="PF04454">
    <property type="entry name" value="Linocin_M18"/>
    <property type="match status" value="1"/>
</dbReference>
<dbReference type="PIRSF" id="PIRSF019254">
    <property type="entry name" value="CFP29"/>
    <property type="match status" value="1"/>
</dbReference>
<feature type="chain" id="PRO_0000455312" description="Type 1 encapsulin shell protein">
    <location>
        <begin position="1"/>
        <end position="265"/>
    </location>
</feature>
<name>ENCP1_MYCPA</name>
<reference key="1">
    <citation type="journal article" date="2005" name="Proc. Natl. Acad. Sci. U.S.A.">
        <title>The complete genome sequence of Mycobacterium avium subspecies paratuberculosis.</title>
        <authorList>
            <person name="Li L."/>
            <person name="Bannantine J.P."/>
            <person name="Zhang Q."/>
            <person name="Amonsin A."/>
            <person name="May B.J."/>
            <person name="Alt D."/>
            <person name="Banerji N."/>
            <person name="Kanjilal S."/>
            <person name="Kapur V."/>
        </authorList>
    </citation>
    <scope>NUCLEOTIDE SEQUENCE [LARGE SCALE GENOMIC DNA]</scope>
    <source>
        <strain>ATCC BAA-968 / K-10</strain>
    </source>
</reference>
<reference key="2">
    <citation type="journal article" date="2015" name="Vet. Microbiol.">
        <title>Envelope protein complexes of Mycobacterium avium subsp. paratuberculosis and their antigenicity.</title>
        <authorList>
            <person name="Leite F.L."/>
            <person name="Reinhardt T.A."/>
            <person name="Bannantine J.P."/>
            <person name="Stabel J.R."/>
        </authorList>
    </citation>
    <scope>IDENTIFICATION BY MASS SPECTROMETRY</scope>
    <scope>INTERACTION WITH DYP</scope>
    <scope>SUBUNIT</scope>
    <scope>SUBCELLULAR LOCATION</scope>
    <scope>ANTIGENICITY</scope>
    <source>
        <strain>509</strain>
    </source>
</reference>
<reference key="3">
    <citation type="journal article" date="2021" name="Nat. Commun.">
        <title>Large-scale computational discovery and analysis of virus-derived microbial nanocompartments.</title>
        <authorList>
            <person name="Andreas M.P."/>
            <person name="Giessen T.W."/>
        </authorList>
    </citation>
    <scope>CLASSIFICATION</scope>
</reference>
<proteinExistence type="evidence at protein level"/>
<comment type="function">
    <text evidence="1 2">Shell component of a type 1 encapsulin nanocompartment. Assembles into proteinaceous shells 23-24 nm in diameter with 2-2.5 nm thick walls. Cargo protein DyP is targeted to the interior via its C-terminal extension; probably only 1 DyP hexamer is incorporated into each shell (By similarity). Probably involved in protection against oxidative damage (By similarity).</text>
</comment>
<comment type="subunit">
    <text evidence="3 4">Found in a complex with DyP, suggesting it is the native cargo protein (PubMed:25500374). Monomers form pentamers, which assemble to form hollow shells composed of 60 subunits with several openings (By similarity).</text>
</comment>
<comment type="subcellular location">
    <subcellularLocation>
        <location evidence="2">Encapsulin nanocompartment</location>
    </subcellularLocation>
    <subcellularLocation>
        <location evidence="6">Cell membrane</location>
    </subcellularLocation>
</comment>
<comment type="similarity">
    <text evidence="5">Belongs to the encapsulin family. Family 1 subfamily.</text>
</comment>
<protein>
    <recommendedName>
        <fullName>Type 1 encapsulin shell protein</fullName>
    </recommendedName>
</protein>
<organism>
    <name type="scientific">Mycolicibacterium paratuberculosis (strain ATCC BAA-968 / K-10)</name>
    <name type="common">Mycobacterium paratuberculosis</name>
    <dbReference type="NCBI Taxonomy" id="262316"/>
    <lineage>
        <taxon>Bacteria</taxon>
        <taxon>Bacillati</taxon>
        <taxon>Actinomycetota</taxon>
        <taxon>Actinomycetes</taxon>
        <taxon>Mycobacteriales</taxon>
        <taxon>Mycobacteriaceae</taxon>
        <taxon>Mycobacterium</taxon>
        <taxon>Mycobacterium avium complex (MAC)</taxon>
    </lineage>
</organism>
<evidence type="ECO:0000250" key="1">
    <source>
        <dbReference type="UniProtKB" id="I6WZG6"/>
    </source>
</evidence>
<evidence type="ECO:0000250" key="2">
    <source>
        <dbReference type="UniProtKB" id="Q45296"/>
    </source>
</evidence>
<evidence type="ECO:0000250" key="3">
    <source>
        <dbReference type="UniProtKB" id="Q9WZP2"/>
    </source>
</evidence>
<evidence type="ECO:0000269" key="4">
    <source>
    </source>
</evidence>
<evidence type="ECO:0000305" key="5"/>
<evidence type="ECO:0000305" key="6">
    <source>
    </source>
</evidence>
<sequence>MNNLYRDLAPVTEAAWGEIELEASRTFKRHVAGRRVVDVSEPGGPAAAAVSTGRLIDVEAPTNGVVAHLRASKPLVRLRVPFTLSRYEIDNVERGANDSDWDPVKEAAKKLAFVEDRAIFEGYAAASIDGIRSASSNKPLALPADPREIPDVITQAISELRLAGVDGPYSVLLSADVYTKVSETTEHGYPILEHIDRLVPGDIIWAPAIDGAFVLTTRGGDFDLQLGTDVSIGYTSHDADTVQLYLQETLTFLCYTAEAAVPLTS</sequence>
<gene>
    <name evidence="5" type="primary">enc1</name>
    <name type="ordered locus">MAP_0630c</name>
</gene>
<keyword id="KW-1003">Cell membrane</keyword>
<keyword id="KW-1284">Encapsulin nanocompartment</keyword>
<keyword id="KW-0472">Membrane</keyword>
<keyword id="KW-1185">Reference proteome</keyword>
<accession>Q743F5</accession>